<dbReference type="EMBL" id="AM286415">
    <property type="protein sequence ID" value="CAL13890.1"/>
    <property type="molecule type" value="Genomic_DNA"/>
</dbReference>
<dbReference type="RefSeq" id="WP_004705335.1">
    <property type="nucleotide sequence ID" value="NC_008800.1"/>
</dbReference>
<dbReference type="RefSeq" id="YP_001008016.1">
    <property type="nucleotide sequence ID" value="NC_008800.1"/>
</dbReference>
<dbReference type="SMR" id="A1JRV7"/>
<dbReference type="GeneID" id="93970571"/>
<dbReference type="KEGG" id="yen:YE3869"/>
<dbReference type="PATRIC" id="fig|393305.7.peg.4119"/>
<dbReference type="eggNOG" id="COG3223">
    <property type="taxonomic scope" value="Bacteria"/>
</dbReference>
<dbReference type="HOGENOM" id="CLU_127561_0_0_6"/>
<dbReference type="OrthoDB" id="9792470at2"/>
<dbReference type="Proteomes" id="UP000000642">
    <property type="component" value="Chromosome"/>
</dbReference>
<dbReference type="GO" id="GO:0005886">
    <property type="term" value="C:plasma membrane"/>
    <property type="evidence" value="ECO:0007669"/>
    <property type="project" value="UniProtKB-SubCell"/>
</dbReference>
<dbReference type="GO" id="GO:0016036">
    <property type="term" value="P:cellular response to phosphate starvation"/>
    <property type="evidence" value="ECO:0007669"/>
    <property type="project" value="InterPro"/>
</dbReference>
<dbReference type="HAMAP" id="MF_01048">
    <property type="entry name" value="PsiE"/>
    <property type="match status" value="1"/>
</dbReference>
<dbReference type="InterPro" id="IPR009315">
    <property type="entry name" value="P_starv_induced_PsiE"/>
</dbReference>
<dbReference type="InterPro" id="IPR020948">
    <property type="entry name" value="P_starv_induced_PsiE-like"/>
</dbReference>
<dbReference type="NCBIfam" id="NF002764">
    <property type="entry name" value="PRK02833.1-2"/>
    <property type="match status" value="1"/>
</dbReference>
<dbReference type="NCBIfam" id="NF002765">
    <property type="entry name" value="PRK02833.1-3"/>
    <property type="match status" value="1"/>
</dbReference>
<dbReference type="PANTHER" id="PTHR37819">
    <property type="entry name" value="PROTEIN PSIE"/>
    <property type="match status" value="1"/>
</dbReference>
<dbReference type="PANTHER" id="PTHR37819:SF1">
    <property type="entry name" value="PROTEIN PSIE"/>
    <property type="match status" value="1"/>
</dbReference>
<dbReference type="Pfam" id="PF06146">
    <property type="entry name" value="PsiE"/>
    <property type="match status" value="1"/>
</dbReference>
<dbReference type="PIRSF" id="PIRSF029598">
    <property type="entry name" value="PsiE"/>
    <property type="match status" value="1"/>
</dbReference>
<proteinExistence type="inferred from homology"/>
<comment type="subcellular location">
    <subcellularLocation>
        <location evidence="1">Cell inner membrane</location>
        <topology evidence="1">Multi-pass membrane protein</topology>
    </subcellularLocation>
</comment>
<comment type="similarity">
    <text evidence="1">Belongs to the PsiE family.</text>
</comment>
<keyword id="KW-0997">Cell inner membrane</keyword>
<keyword id="KW-1003">Cell membrane</keyword>
<keyword id="KW-0472">Membrane</keyword>
<keyword id="KW-0812">Transmembrane</keyword>
<keyword id="KW-1133">Transmembrane helix</keyword>
<protein>
    <recommendedName>
        <fullName evidence="1">Protein PsiE homolog</fullName>
    </recommendedName>
</protein>
<feature type="chain" id="PRO_1000064322" description="Protein PsiE homolog">
    <location>
        <begin position="1"/>
        <end position="135"/>
    </location>
</feature>
<feature type="transmembrane region" description="Helical" evidence="1">
    <location>
        <begin position="20"/>
        <end position="40"/>
    </location>
</feature>
<feature type="transmembrane region" description="Helical" evidence="1">
    <location>
        <begin position="54"/>
        <end position="74"/>
    </location>
</feature>
<feature type="transmembrane region" description="Helical" evidence="1">
    <location>
        <begin position="82"/>
        <end position="102"/>
    </location>
</feature>
<feature type="transmembrane region" description="Helical" evidence="1">
    <location>
        <begin position="107"/>
        <end position="127"/>
    </location>
</feature>
<gene>
    <name evidence="1" type="primary">psiE</name>
    <name type="ordered locus">YE3869</name>
</gene>
<reference key="1">
    <citation type="journal article" date="2006" name="PLoS Genet.">
        <title>The complete genome sequence and comparative genome analysis of the high pathogenicity Yersinia enterocolitica strain 8081.</title>
        <authorList>
            <person name="Thomson N.R."/>
            <person name="Howard S."/>
            <person name="Wren B.W."/>
            <person name="Holden M.T.G."/>
            <person name="Crossman L."/>
            <person name="Challis G.L."/>
            <person name="Churcher C."/>
            <person name="Mungall K."/>
            <person name="Brooks K."/>
            <person name="Chillingworth T."/>
            <person name="Feltwell T."/>
            <person name="Abdellah Z."/>
            <person name="Hauser H."/>
            <person name="Jagels K."/>
            <person name="Maddison M."/>
            <person name="Moule S."/>
            <person name="Sanders M."/>
            <person name="Whitehead S."/>
            <person name="Quail M.A."/>
            <person name="Dougan G."/>
            <person name="Parkhill J."/>
            <person name="Prentice M.B."/>
        </authorList>
    </citation>
    <scope>NUCLEOTIDE SEQUENCE [LARGE SCALE GENOMIC DNA]</scope>
    <source>
        <strain>NCTC 13174 / 8081</strain>
    </source>
</reference>
<accession>A1JRV7</accession>
<name>PSIE_YERE8</name>
<organism>
    <name type="scientific">Yersinia enterocolitica serotype O:8 / biotype 1B (strain NCTC 13174 / 8081)</name>
    <dbReference type="NCBI Taxonomy" id="393305"/>
    <lineage>
        <taxon>Bacteria</taxon>
        <taxon>Pseudomonadati</taxon>
        <taxon>Pseudomonadota</taxon>
        <taxon>Gammaproteobacteria</taxon>
        <taxon>Enterobacterales</taxon>
        <taxon>Yersiniaceae</taxon>
        <taxon>Yersinia</taxon>
    </lineage>
</organism>
<evidence type="ECO:0000255" key="1">
    <source>
        <dbReference type="HAMAP-Rule" id="MF_01048"/>
    </source>
</evidence>
<sequence length="135" mass="15619">MAKNSRSQWIAKNLQRLLNVGLIALAAILVVFLIKETFHLGKVLFVNNQDASSYMLIEGIVIYFLYFEFIALIVKYFESGYHFPLRYFIYIGITAIIRLIIVDHENPIDTLIYSGSILLLVVTLYLANTERLKRE</sequence>